<organism>
    <name type="scientific">Salmonella paratyphi A (strain AKU_12601)</name>
    <dbReference type="NCBI Taxonomy" id="554290"/>
    <lineage>
        <taxon>Bacteria</taxon>
        <taxon>Pseudomonadati</taxon>
        <taxon>Pseudomonadota</taxon>
        <taxon>Gammaproteobacteria</taxon>
        <taxon>Enterobacterales</taxon>
        <taxon>Enterobacteriaceae</taxon>
        <taxon>Salmonella</taxon>
    </lineage>
</organism>
<gene>
    <name evidence="1" type="primary">pfkA</name>
    <name type="ordered locus">SSPA3633</name>
</gene>
<sequence length="320" mass="34915">MIKKIGVLTSGGDAPGMNAAIRGVVRAALTEGLEVMGIYDGYLGLYEDRMVQLDRYSVSDMINRGGTFLGSARFPEFRDENIRAVAIENLKKRGIDALVVIGGDGSYMGAKRLTEMGFPCIGLPGTIDNDIKGTDYTIGYFTALGTVVEAIDRLRDTSSSHQRISIVEVMGRYCGDLTLAAAIAGGCEFIVVPEVEFNREDLVAEIKAGIAKGKKHAIVAITEHMCDVDELAHFIEKETGRETRATVLGHIQRGGSPVPYDRILASRMGAYAIDLLLEGHGGRCVGIQNEQLVHHDIIDAIENMKRPFKSDWMECAKKLY</sequence>
<protein>
    <recommendedName>
        <fullName evidence="1">ATP-dependent 6-phosphofructokinase</fullName>
        <shortName evidence="1">ATP-PFK</shortName>
        <shortName evidence="1">Phosphofructokinase</shortName>
        <ecNumber evidence="1">2.7.1.11</ecNumber>
    </recommendedName>
    <alternativeName>
        <fullName evidence="1">Phosphohexokinase</fullName>
    </alternativeName>
</protein>
<evidence type="ECO:0000255" key="1">
    <source>
        <dbReference type="HAMAP-Rule" id="MF_00339"/>
    </source>
</evidence>
<name>PFKA_SALPK</name>
<reference key="1">
    <citation type="journal article" date="2009" name="BMC Genomics">
        <title>Pseudogene accumulation in the evolutionary histories of Salmonella enterica serovars Paratyphi A and Typhi.</title>
        <authorList>
            <person name="Holt K.E."/>
            <person name="Thomson N.R."/>
            <person name="Wain J."/>
            <person name="Langridge G.C."/>
            <person name="Hasan R."/>
            <person name="Bhutta Z.A."/>
            <person name="Quail M.A."/>
            <person name="Norbertczak H."/>
            <person name="Walker D."/>
            <person name="Simmonds M."/>
            <person name="White B."/>
            <person name="Bason N."/>
            <person name="Mungall K."/>
            <person name="Dougan G."/>
            <person name="Parkhill J."/>
        </authorList>
    </citation>
    <scope>NUCLEOTIDE SEQUENCE [LARGE SCALE GENOMIC DNA]</scope>
    <source>
        <strain>AKU_12601</strain>
    </source>
</reference>
<accession>B5BJI2</accession>
<dbReference type="EC" id="2.7.1.11" evidence="1"/>
<dbReference type="EMBL" id="FM200053">
    <property type="protein sequence ID" value="CAR61915.1"/>
    <property type="molecule type" value="Genomic_DNA"/>
</dbReference>
<dbReference type="RefSeq" id="WP_000591793.1">
    <property type="nucleotide sequence ID" value="NC_011147.1"/>
</dbReference>
<dbReference type="SMR" id="B5BJI2"/>
<dbReference type="GeneID" id="66758327"/>
<dbReference type="KEGG" id="sek:SSPA3633"/>
<dbReference type="HOGENOM" id="CLU_020655_0_1_6"/>
<dbReference type="UniPathway" id="UPA00109">
    <property type="reaction ID" value="UER00182"/>
</dbReference>
<dbReference type="Proteomes" id="UP000001869">
    <property type="component" value="Chromosome"/>
</dbReference>
<dbReference type="GO" id="GO:0005945">
    <property type="term" value="C:6-phosphofructokinase complex"/>
    <property type="evidence" value="ECO:0007669"/>
    <property type="project" value="TreeGrafter"/>
</dbReference>
<dbReference type="GO" id="GO:0003872">
    <property type="term" value="F:6-phosphofructokinase activity"/>
    <property type="evidence" value="ECO:0007669"/>
    <property type="project" value="UniProtKB-UniRule"/>
</dbReference>
<dbReference type="GO" id="GO:0016208">
    <property type="term" value="F:AMP binding"/>
    <property type="evidence" value="ECO:0007669"/>
    <property type="project" value="TreeGrafter"/>
</dbReference>
<dbReference type="GO" id="GO:0005524">
    <property type="term" value="F:ATP binding"/>
    <property type="evidence" value="ECO:0007669"/>
    <property type="project" value="UniProtKB-KW"/>
</dbReference>
<dbReference type="GO" id="GO:0070095">
    <property type="term" value="F:fructose-6-phosphate binding"/>
    <property type="evidence" value="ECO:0007669"/>
    <property type="project" value="TreeGrafter"/>
</dbReference>
<dbReference type="GO" id="GO:0042802">
    <property type="term" value="F:identical protein binding"/>
    <property type="evidence" value="ECO:0007669"/>
    <property type="project" value="TreeGrafter"/>
</dbReference>
<dbReference type="GO" id="GO:0046872">
    <property type="term" value="F:metal ion binding"/>
    <property type="evidence" value="ECO:0007669"/>
    <property type="project" value="UniProtKB-KW"/>
</dbReference>
<dbReference type="GO" id="GO:0048029">
    <property type="term" value="F:monosaccharide binding"/>
    <property type="evidence" value="ECO:0007669"/>
    <property type="project" value="TreeGrafter"/>
</dbReference>
<dbReference type="GO" id="GO:0061621">
    <property type="term" value="P:canonical glycolysis"/>
    <property type="evidence" value="ECO:0007669"/>
    <property type="project" value="TreeGrafter"/>
</dbReference>
<dbReference type="GO" id="GO:0030388">
    <property type="term" value="P:fructose 1,6-bisphosphate metabolic process"/>
    <property type="evidence" value="ECO:0007669"/>
    <property type="project" value="TreeGrafter"/>
</dbReference>
<dbReference type="GO" id="GO:0006002">
    <property type="term" value="P:fructose 6-phosphate metabolic process"/>
    <property type="evidence" value="ECO:0007669"/>
    <property type="project" value="InterPro"/>
</dbReference>
<dbReference type="CDD" id="cd00763">
    <property type="entry name" value="Bacterial_PFK"/>
    <property type="match status" value="1"/>
</dbReference>
<dbReference type="FunFam" id="3.40.50.450:FF:000001">
    <property type="entry name" value="ATP-dependent 6-phosphofructokinase"/>
    <property type="match status" value="1"/>
</dbReference>
<dbReference type="FunFam" id="3.40.50.460:FF:000002">
    <property type="entry name" value="ATP-dependent 6-phosphofructokinase"/>
    <property type="match status" value="1"/>
</dbReference>
<dbReference type="Gene3D" id="3.40.50.450">
    <property type="match status" value="1"/>
</dbReference>
<dbReference type="Gene3D" id="3.40.50.460">
    <property type="entry name" value="Phosphofructokinase domain"/>
    <property type="match status" value="1"/>
</dbReference>
<dbReference type="HAMAP" id="MF_00339">
    <property type="entry name" value="Phosphofructokinase_I_B1"/>
    <property type="match status" value="1"/>
</dbReference>
<dbReference type="InterPro" id="IPR022953">
    <property type="entry name" value="ATP_PFK"/>
</dbReference>
<dbReference type="InterPro" id="IPR012003">
    <property type="entry name" value="ATP_PFK_prok-type"/>
</dbReference>
<dbReference type="InterPro" id="IPR012828">
    <property type="entry name" value="PFKA_ATP_prok"/>
</dbReference>
<dbReference type="InterPro" id="IPR015912">
    <property type="entry name" value="Phosphofructokinase_CS"/>
</dbReference>
<dbReference type="InterPro" id="IPR000023">
    <property type="entry name" value="Phosphofructokinase_dom"/>
</dbReference>
<dbReference type="InterPro" id="IPR035966">
    <property type="entry name" value="PKF_sf"/>
</dbReference>
<dbReference type="NCBIfam" id="TIGR02482">
    <property type="entry name" value="PFKA_ATP"/>
    <property type="match status" value="1"/>
</dbReference>
<dbReference type="NCBIfam" id="NF002872">
    <property type="entry name" value="PRK03202.1"/>
    <property type="match status" value="1"/>
</dbReference>
<dbReference type="PANTHER" id="PTHR13697:SF4">
    <property type="entry name" value="ATP-DEPENDENT 6-PHOSPHOFRUCTOKINASE"/>
    <property type="match status" value="1"/>
</dbReference>
<dbReference type="PANTHER" id="PTHR13697">
    <property type="entry name" value="PHOSPHOFRUCTOKINASE"/>
    <property type="match status" value="1"/>
</dbReference>
<dbReference type="Pfam" id="PF00365">
    <property type="entry name" value="PFK"/>
    <property type="match status" value="1"/>
</dbReference>
<dbReference type="PIRSF" id="PIRSF000532">
    <property type="entry name" value="ATP_PFK_prok"/>
    <property type="match status" value="1"/>
</dbReference>
<dbReference type="PRINTS" id="PR00476">
    <property type="entry name" value="PHFRCTKINASE"/>
</dbReference>
<dbReference type="SUPFAM" id="SSF53784">
    <property type="entry name" value="Phosphofructokinase"/>
    <property type="match status" value="1"/>
</dbReference>
<dbReference type="PROSITE" id="PS00433">
    <property type="entry name" value="PHOSPHOFRUCTOKINASE"/>
    <property type="match status" value="1"/>
</dbReference>
<keyword id="KW-0021">Allosteric enzyme</keyword>
<keyword id="KW-0067">ATP-binding</keyword>
<keyword id="KW-0963">Cytoplasm</keyword>
<keyword id="KW-0324">Glycolysis</keyword>
<keyword id="KW-0418">Kinase</keyword>
<keyword id="KW-0460">Magnesium</keyword>
<keyword id="KW-0479">Metal-binding</keyword>
<keyword id="KW-0547">Nucleotide-binding</keyword>
<keyword id="KW-0808">Transferase</keyword>
<proteinExistence type="inferred from homology"/>
<comment type="function">
    <text evidence="1">Catalyzes the phosphorylation of D-fructose 6-phosphate to fructose 1,6-bisphosphate by ATP, the first committing step of glycolysis.</text>
</comment>
<comment type="catalytic activity">
    <reaction evidence="1">
        <text>beta-D-fructose 6-phosphate + ATP = beta-D-fructose 1,6-bisphosphate + ADP + H(+)</text>
        <dbReference type="Rhea" id="RHEA:16109"/>
        <dbReference type="ChEBI" id="CHEBI:15378"/>
        <dbReference type="ChEBI" id="CHEBI:30616"/>
        <dbReference type="ChEBI" id="CHEBI:32966"/>
        <dbReference type="ChEBI" id="CHEBI:57634"/>
        <dbReference type="ChEBI" id="CHEBI:456216"/>
        <dbReference type="EC" id="2.7.1.11"/>
    </reaction>
</comment>
<comment type="cofactor">
    <cofactor evidence="1">
        <name>Mg(2+)</name>
        <dbReference type="ChEBI" id="CHEBI:18420"/>
    </cofactor>
</comment>
<comment type="activity regulation">
    <text evidence="1">Allosterically activated by ADP and other diphosphonucleosides, and allosterically inhibited by phosphoenolpyruvate.</text>
</comment>
<comment type="pathway">
    <text evidence="1">Carbohydrate degradation; glycolysis; D-glyceraldehyde 3-phosphate and glycerone phosphate from D-glucose: step 3/4.</text>
</comment>
<comment type="subunit">
    <text evidence="1">Homotetramer.</text>
</comment>
<comment type="subcellular location">
    <subcellularLocation>
        <location evidence="1">Cytoplasm</location>
    </subcellularLocation>
</comment>
<comment type="similarity">
    <text evidence="1">Belongs to the phosphofructokinase type A (PFKA) family. ATP-dependent PFK group I subfamily. Prokaryotic clade 'B1' sub-subfamily.</text>
</comment>
<feature type="chain" id="PRO_1000120056" description="ATP-dependent 6-phosphofructokinase">
    <location>
        <begin position="1"/>
        <end position="320"/>
    </location>
</feature>
<feature type="active site" description="Proton acceptor" evidence="1">
    <location>
        <position position="128"/>
    </location>
</feature>
<feature type="binding site" evidence="1">
    <location>
        <position position="12"/>
    </location>
    <ligand>
        <name>ATP</name>
        <dbReference type="ChEBI" id="CHEBI:30616"/>
    </ligand>
</feature>
<feature type="binding site" evidence="1">
    <location>
        <begin position="22"/>
        <end position="26"/>
    </location>
    <ligand>
        <name>ADP</name>
        <dbReference type="ChEBI" id="CHEBI:456216"/>
        <note>allosteric activator; ligand shared between dimeric partners</note>
    </ligand>
</feature>
<feature type="binding site" evidence="1">
    <location>
        <begin position="55"/>
        <end position="60"/>
    </location>
    <ligand>
        <name>ADP</name>
        <dbReference type="ChEBI" id="CHEBI:456216"/>
        <note>allosteric activator; ligand shared between dimeric partners</note>
    </ligand>
</feature>
<feature type="binding site" evidence="1">
    <location>
        <begin position="73"/>
        <end position="74"/>
    </location>
    <ligand>
        <name>ATP</name>
        <dbReference type="ChEBI" id="CHEBI:30616"/>
    </ligand>
</feature>
<feature type="binding site" evidence="1">
    <location>
        <begin position="103"/>
        <end position="106"/>
    </location>
    <ligand>
        <name>ATP</name>
        <dbReference type="ChEBI" id="CHEBI:30616"/>
    </ligand>
</feature>
<feature type="binding site" evidence="1">
    <location>
        <position position="104"/>
    </location>
    <ligand>
        <name>Mg(2+)</name>
        <dbReference type="ChEBI" id="CHEBI:18420"/>
        <note>catalytic</note>
    </ligand>
</feature>
<feature type="binding site" description="in other chain" evidence="1">
    <location>
        <begin position="126"/>
        <end position="128"/>
    </location>
    <ligand>
        <name>substrate</name>
        <note>ligand shared between dimeric partners</note>
    </ligand>
</feature>
<feature type="binding site" description="in other chain" evidence="1">
    <location>
        <position position="155"/>
    </location>
    <ligand>
        <name>ADP</name>
        <dbReference type="ChEBI" id="CHEBI:456216"/>
        <note>allosteric activator; ligand shared between dimeric partners</note>
    </ligand>
</feature>
<feature type="binding site" evidence="1">
    <location>
        <position position="163"/>
    </location>
    <ligand>
        <name>substrate</name>
        <note>ligand shared between dimeric partners</note>
    </ligand>
</feature>
<feature type="binding site" description="in other chain" evidence="1">
    <location>
        <begin position="170"/>
        <end position="172"/>
    </location>
    <ligand>
        <name>substrate</name>
        <note>ligand shared between dimeric partners</note>
    </ligand>
</feature>
<feature type="binding site" description="in other chain" evidence="1">
    <location>
        <begin position="186"/>
        <end position="188"/>
    </location>
    <ligand>
        <name>ADP</name>
        <dbReference type="ChEBI" id="CHEBI:456216"/>
        <note>allosteric activator; ligand shared between dimeric partners</note>
    </ligand>
</feature>
<feature type="binding site" description="in other chain" evidence="1">
    <location>
        <position position="212"/>
    </location>
    <ligand>
        <name>ADP</name>
        <dbReference type="ChEBI" id="CHEBI:456216"/>
        <note>allosteric activator; ligand shared between dimeric partners</note>
    </ligand>
</feature>
<feature type="binding site" description="in other chain" evidence="1">
    <location>
        <begin position="214"/>
        <end position="216"/>
    </location>
    <ligand>
        <name>ADP</name>
        <dbReference type="ChEBI" id="CHEBI:456216"/>
        <note>allosteric activator; ligand shared between dimeric partners</note>
    </ligand>
</feature>
<feature type="binding site" description="in other chain" evidence="1">
    <location>
        <position position="223"/>
    </location>
    <ligand>
        <name>substrate</name>
        <note>ligand shared between dimeric partners</note>
    </ligand>
</feature>
<feature type="binding site" evidence="1">
    <location>
        <position position="244"/>
    </location>
    <ligand>
        <name>substrate</name>
        <note>ligand shared between dimeric partners</note>
    </ligand>
</feature>
<feature type="binding site" description="in other chain" evidence="1">
    <location>
        <begin position="250"/>
        <end position="253"/>
    </location>
    <ligand>
        <name>substrate</name>
        <note>ligand shared between dimeric partners</note>
    </ligand>
</feature>